<gene>
    <name type="ordered locus">TGRD_033</name>
</gene>
<comment type="similarity">
    <text evidence="1">Belongs to the CinA family.</text>
</comment>
<reference key="1">
    <citation type="journal article" date="2008" name="Proc. Natl. Acad. Sci. U.S.A.">
        <title>Complete genome of the uncultured termite group 1 bacteria in a single host protist cell.</title>
        <authorList>
            <person name="Hongoh Y."/>
            <person name="Sharma V.K."/>
            <person name="Prakash T."/>
            <person name="Noda S."/>
            <person name="Taylor T.D."/>
            <person name="Kudo T."/>
            <person name="Sakaki Y."/>
            <person name="Toyoda A."/>
            <person name="Hattori M."/>
            <person name="Ohkuma M."/>
        </authorList>
    </citation>
    <scope>NUCLEOTIDE SEQUENCE [LARGE SCALE GENOMIC DNA]</scope>
</reference>
<feature type="chain" id="PRO_1000124998" description="CinA-like protein">
    <location>
        <begin position="1"/>
        <end position="428"/>
    </location>
</feature>
<evidence type="ECO:0000255" key="1">
    <source>
        <dbReference type="HAMAP-Rule" id="MF_00226"/>
    </source>
</evidence>
<accession>B1GZ34</accession>
<dbReference type="EMBL" id="AP009510">
    <property type="protein sequence ID" value="BAG13516.1"/>
    <property type="molecule type" value="Genomic_DNA"/>
</dbReference>
<dbReference type="RefSeq" id="WP_015423045.1">
    <property type="nucleotide sequence ID" value="NC_020419.1"/>
</dbReference>
<dbReference type="SMR" id="B1GZ34"/>
<dbReference type="STRING" id="471821.TGRD_033"/>
<dbReference type="KEGG" id="rsd:TGRD_033"/>
<dbReference type="PATRIC" id="fig|471821.5.peg.56"/>
<dbReference type="HOGENOM" id="CLU_030805_9_2_0"/>
<dbReference type="Proteomes" id="UP000001691">
    <property type="component" value="Chromosome"/>
</dbReference>
<dbReference type="CDD" id="cd00885">
    <property type="entry name" value="cinA"/>
    <property type="match status" value="1"/>
</dbReference>
<dbReference type="Gene3D" id="3.90.950.20">
    <property type="entry name" value="CinA-like"/>
    <property type="match status" value="1"/>
</dbReference>
<dbReference type="Gene3D" id="3.40.980.10">
    <property type="entry name" value="MoaB/Mog-like domain"/>
    <property type="match status" value="1"/>
</dbReference>
<dbReference type="HAMAP" id="MF_00226_B">
    <property type="entry name" value="CinA_B"/>
    <property type="match status" value="1"/>
</dbReference>
<dbReference type="InterPro" id="IPR050101">
    <property type="entry name" value="CinA"/>
</dbReference>
<dbReference type="InterPro" id="IPR036653">
    <property type="entry name" value="CinA-like_C"/>
</dbReference>
<dbReference type="InterPro" id="IPR008136">
    <property type="entry name" value="CinA_C"/>
</dbReference>
<dbReference type="InterPro" id="IPR041424">
    <property type="entry name" value="CinA_KH"/>
</dbReference>
<dbReference type="InterPro" id="IPR008135">
    <property type="entry name" value="Competence-induced_CinA"/>
</dbReference>
<dbReference type="InterPro" id="IPR036425">
    <property type="entry name" value="MoaB/Mog-like_dom_sf"/>
</dbReference>
<dbReference type="InterPro" id="IPR001453">
    <property type="entry name" value="MoaB/Mog_dom"/>
</dbReference>
<dbReference type="NCBIfam" id="TIGR00200">
    <property type="entry name" value="cinA_nterm"/>
    <property type="match status" value="1"/>
</dbReference>
<dbReference type="NCBIfam" id="TIGR00199">
    <property type="entry name" value="PncC_domain"/>
    <property type="match status" value="1"/>
</dbReference>
<dbReference type="NCBIfam" id="NF001813">
    <property type="entry name" value="PRK00549.1"/>
    <property type="match status" value="1"/>
</dbReference>
<dbReference type="PANTHER" id="PTHR13939">
    <property type="entry name" value="NICOTINAMIDE-NUCLEOTIDE AMIDOHYDROLASE PNCC"/>
    <property type="match status" value="1"/>
</dbReference>
<dbReference type="PANTHER" id="PTHR13939:SF0">
    <property type="entry name" value="NMN AMIDOHYDROLASE-LIKE PROTEIN YFAY"/>
    <property type="match status" value="1"/>
</dbReference>
<dbReference type="Pfam" id="PF02464">
    <property type="entry name" value="CinA"/>
    <property type="match status" value="1"/>
</dbReference>
<dbReference type="Pfam" id="PF18146">
    <property type="entry name" value="CinA_KH"/>
    <property type="match status" value="1"/>
</dbReference>
<dbReference type="Pfam" id="PF00994">
    <property type="entry name" value="MoCF_biosynth"/>
    <property type="match status" value="1"/>
</dbReference>
<dbReference type="PIRSF" id="PIRSF006728">
    <property type="entry name" value="CinA"/>
    <property type="match status" value="1"/>
</dbReference>
<dbReference type="SMART" id="SM00852">
    <property type="entry name" value="MoCF_biosynth"/>
    <property type="match status" value="1"/>
</dbReference>
<dbReference type="SUPFAM" id="SSF142433">
    <property type="entry name" value="CinA-like"/>
    <property type="match status" value="1"/>
</dbReference>
<dbReference type="SUPFAM" id="SSF53218">
    <property type="entry name" value="Molybdenum cofactor biosynthesis proteins"/>
    <property type="match status" value="1"/>
</dbReference>
<sequence length="428" mass="46857">MKIELICTGSELLTGKVNTNAAYIGSRLSAIGFEISLVTDVGDKKQDLLREFKRAFKRSNIVITTGGLGPTFDDITVETAAECLNLKIYPDEKVLNSIKEYFLKRSVAASIPKINEKQANIIRGAKVLENRVGTAPGQMLHFKFKDSEKKYRKTLFLLPGPPEEMKPIFEENVEPFLKSYSVGIKKNGVLHVFGIAESAVEEMIKPVMEEAVSGDSKFVEFGILASKSVIDIKFSVSGTDELFVDETISKLKLGFGNVLKDNIFGFDNDTLASVAGRLLLENKKTVSFAESCTGGNIAAAITDIPGSSLYFKSSVVTYSNESKMKLLGVKEETLTNFGAVSKETVKEMAEGVLKLSDSDYAFSVTGIAGPIGGTKKKPVGLVYIGSADKKKTESFKFNFSGTRKDIRKRTVNTALDLLRRKLIAKHSY</sequence>
<protein>
    <recommendedName>
        <fullName evidence="1">CinA-like protein</fullName>
    </recommendedName>
</protein>
<name>CINAL_ENDTX</name>
<proteinExistence type="inferred from homology"/>
<organism>
    <name type="scientific">Endomicrobium trichonymphae</name>
    <dbReference type="NCBI Taxonomy" id="1408204"/>
    <lineage>
        <taxon>Bacteria</taxon>
        <taxon>Pseudomonadati</taxon>
        <taxon>Elusimicrobiota</taxon>
        <taxon>Endomicrobiia</taxon>
        <taxon>Endomicrobiales</taxon>
        <taxon>Endomicrobiaceae</taxon>
        <taxon>Candidatus Endomicrobiellum</taxon>
    </lineage>
</organism>